<organism>
    <name type="scientific">Clostridioides difficile (strain 630)</name>
    <name type="common">Peptoclostridium difficile</name>
    <dbReference type="NCBI Taxonomy" id="272563"/>
    <lineage>
        <taxon>Bacteria</taxon>
        <taxon>Bacillati</taxon>
        <taxon>Bacillota</taxon>
        <taxon>Clostridia</taxon>
        <taxon>Peptostreptococcales</taxon>
        <taxon>Peptostreptococcaceae</taxon>
        <taxon>Clostridioides</taxon>
    </lineage>
</organism>
<dbReference type="EC" id="5.1.3.9" evidence="1"/>
<dbReference type="EMBL" id="AM180355">
    <property type="protein sequence ID" value="CAJ69126.1"/>
    <property type="molecule type" value="Genomic_DNA"/>
</dbReference>
<dbReference type="RefSeq" id="WP_003430452.1">
    <property type="nucleotide sequence ID" value="NZ_JAUPES010000011.1"/>
</dbReference>
<dbReference type="RefSeq" id="YP_001088755.1">
    <property type="nucleotide sequence ID" value="NC_009089.1"/>
</dbReference>
<dbReference type="SMR" id="Q185B2"/>
<dbReference type="STRING" id="272563.CD630_22410"/>
<dbReference type="EnsemblBacteria" id="CAJ69126">
    <property type="protein sequence ID" value="CAJ69126"/>
    <property type="gene ID" value="CD630_22410"/>
</dbReference>
<dbReference type="KEGG" id="cdf:CD630_22410"/>
<dbReference type="KEGG" id="pdc:CDIF630_02474"/>
<dbReference type="PATRIC" id="fig|272563.120.peg.2368"/>
<dbReference type="eggNOG" id="COG3010">
    <property type="taxonomic scope" value="Bacteria"/>
</dbReference>
<dbReference type="OrthoDB" id="9781704at2"/>
<dbReference type="PhylomeDB" id="Q185B2"/>
<dbReference type="BioCyc" id="PDIF272563:G12WB-2396-MONOMER"/>
<dbReference type="UniPathway" id="UPA00629">
    <property type="reaction ID" value="UER00682"/>
</dbReference>
<dbReference type="Proteomes" id="UP000001978">
    <property type="component" value="Chromosome"/>
</dbReference>
<dbReference type="GO" id="GO:0005829">
    <property type="term" value="C:cytosol"/>
    <property type="evidence" value="ECO:0007669"/>
    <property type="project" value="TreeGrafter"/>
</dbReference>
<dbReference type="GO" id="GO:0047465">
    <property type="term" value="F:N-acylglucosamine-6-phosphate 2-epimerase activity"/>
    <property type="evidence" value="ECO:0007669"/>
    <property type="project" value="UniProtKB-EC"/>
</dbReference>
<dbReference type="GO" id="GO:0005975">
    <property type="term" value="P:carbohydrate metabolic process"/>
    <property type="evidence" value="ECO:0007669"/>
    <property type="project" value="UniProtKB-UniRule"/>
</dbReference>
<dbReference type="GO" id="GO:0006053">
    <property type="term" value="P:N-acetylmannosamine catabolic process"/>
    <property type="evidence" value="ECO:0007669"/>
    <property type="project" value="TreeGrafter"/>
</dbReference>
<dbReference type="GO" id="GO:0019262">
    <property type="term" value="P:N-acetylneuraminate catabolic process"/>
    <property type="evidence" value="ECO:0007669"/>
    <property type="project" value="UniProtKB-UniRule"/>
</dbReference>
<dbReference type="CDD" id="cd04729">
    <property type="entry name" value="NanE"/>
    <property type="match status" value="1"/>
</dbReference>
<dbReference type="FunFam" id="3.20.20.70:FF:000035">
    <property type="entry name" value="Putative N-acetylmannosamine-6-phosphate 2-epimerase"/>
    <property type="match status" value="1"/>
</dbReference>
<dbReference type="Gene3D" id="3.20.20.70">
    <property type="entry name" value="Aldolase class I"/>
    <property type="match status" value="1"/>
</dbReference>
<dbReference type="HAMAP" id="MF_01235">
    <property type="entry name" value="ManNAc6P_epimer"/>
    <property type="match status" value="1"/>
</dbReference>
<dbReference type="InterPro" id="IPR013785">
    <property type="entry name" value="Aldolase_TIM"/>
</dbReference>
<dbReference type="InterPro" id="IPR007260">
    <property type="entry name" value="NanE"/>
</dbReference>
<dbReference type="InterPro" id="IPR011060">
    <property type="entry name" value="RibuloseP-bd_barrel"/>
</dbReference>
<dbReference type="NCBIfam" id="NF002231">
    <property type="entry name" value="PRK01130.1"/>
    <property type="match status" value="1"/>
</dbReference>
<dbReference type="PANTHER" id="PTHR36204">
    <property type="entry name" value="N-ACETYLMANNOSAMINE-6-PHOSPHATE 2-EPIMERASE-RELATED"/>
    <property type="match status" value="1"/>
</dbReference>
<dbReference type="PANTHER" id="PTHR36204:SF1">
    <property type="entry name" value="N-ACETYLMANNOSAMINE-6-PHOSPHATE 2-EPIMERASE-RELATED"/>
    <property type="match status" value="1"/>
</dbReference>
<dbReference type="Pfam" id="PF04131">
    <property type="entry name" value="NanE"/>
    <property type="match status" value="1"/>
</dbReference>
<dbReference type="SUPFAM" id="SSF51366">
    <property type="entry name" value="Ribulose-phoshate binding barrel"/>
    <property type="match status" value="1"/>
</dbReference>
<accession>Q185B2</accession>
<keyword id="KW-0119">Carbohydrate metabolism</keyword>
<keyword id="KW-0413">Isomerase</keyword>
<keyword id="KW-1185">Reference proteome</keyword>
<gene>
    <name evidence="1" type="primary">nanE</name>
    <name type="ordered locus">CD630_22410</name>
</gene>
<comment type="function">
    <text evidence="1">Converts N-acetylmannosamine-6-phosphate (ManNAc-6-P) to N-acetylglucosamine-6-phosphate (GlcNAc-6-P).</text>
</comment>
<comment type="catalytic activity">
    <reaction evidence="1">
        <text>an N-acyl-D-glucosamine 6-phosphate = an N-acyl-D-mannosamine 6-phosphate</text>
        <dbReference type="Rhea" id="RHEA:23932"/>
        <dbReference type="ChEBI" id="CHEBI:57599"/>
        <dbReference type="ChEBI" id="CHEBI:57666"/>
        <dbReference type="EC" id="5.1.3.9"/>
    </reaction>
</comment>
<comment type="pathway">
    <text evidence="1">Amino-sugar metabolism; N-acetylneuraminate degradation; D-fructose 6-phosphate from N-acetylneuraminate: step 3/5.</text>
</comment>
<comment type="similarity">
    <text evidence="1">Belongs to the NanE family.</text>
</comment>
<name>NANE_CLOD6</name>
<feature type="chain" id="PRO_0000301467" description="Putative N-acetylmannosamine-6-phosphate 2-epimerase">
    <location>
        <begin position="1"/>
        <end position="223"/>
    </location>
</feature>
<protein>
    <recommendedName>
        <fullName evidence="1">Putative N-acetylmannosamine-6-phosphate 2-epimerase</fullName>
        <ecNumber evidence="1">5.1.3.9</ecNumber>
    </recommendedName>
    <alternativeName>
        <fullName evidence="1">ManNAc-6-P epimerase</fullName>
    </alternativeName>
</protein>
<reference key="1">
    <citation type="journal article" date="2006" name="Nat. Genet.">
        <title>The multidrug-resistant human pathogen Clostridium difficile has a highly mobile, mosaic genome.</title>
        <authorList>
            <person name="Sebaihia M."/>
            <person name="Wren B.W."/>
            <person name="Mullany P."/>
            <person name="Fairweather N.F."/>
            <person name="Minton N."/>
            <person name="Stabler R."/>
            <person name="Thomson N.R."/>
            <person name="Roberts A.P."/>
            <person name="Cerdeno-Tarraga A.M."/>
            <person name="Wang H."/>
            <person name="Holden M.T.G."/>
            <person name="Wright A."/>
            <person name="Churcher C."/>
            <person name="Quail M.A."/>
            <person name="Baker S."/>
            <person name="Bason N."/>
            <person name="Brooks K."/>
            <person name="Chillingworth T."/>
            <person name="Cronin A."/>
            <person name="Davis P."/>
            <person name="Dowd L."/>
            <person name="Fraser A."/>
            <person name="Feltwell T."/>
            <person name="Hance Z."/>
            <person name="Holroyd S."/>
            <person name="Jagels K."/>
            <person name="Moule S."/>
            <person name="Mungall K."/>
            <person name="Price C."/>
            <person name="Rabbinowitsch E."/>
            <person name="Sharp S."/>
            <person name="Simmonds M."/>
            <person name="Stevens K."/>
            <person name="Unwin L."/>
            <person name="Whithead S."/>
            <person name="Dupuy B."/>
            <person name="Dougan G."/>
            <person name="Barrell B."/>
            <person name="Parkhill J."/>
        </authorList>
    </citation>
    <scope>NUCLEOTIDE SEQUENCE [LARGE SCALE GENOMIC DNA]</scope>
    <source>
        <strain>630</strain>
    </source>
</reference>
<evidence type="ECO:0000255" key="1">
    <source>
        <dbReference type="HAMAP-Rule" id="MF_01235"/>
    </source>
</evidence>
<proteinExistence type="inferred from homology"/>
<sequence>MLDKVKGRLIVSCQALENEPLHSPFIMGRMAKAAMEGGAVGIRAQGVEDIIEIKKVTGLPVIGIIKRNYEDSDIYITPTKKEVDELLTTGCEMIALDATNRVRPNNEDLKELIKYIKENGVLVMADISNYDEAIKAQEYGVDCVSTTLSGYTPYTKTLEGPDFVLMERLVKDLEIPVIAEGKVNTPQDLKKVFELGVHSSVVGSAITRPQLITEKFVKAIEIN</sequence>